<accession>A6BM35</accession>
<accession>B7ZIA0</accession>
<sequence>MVDTTGRIPLWLVGTVAGILVIGLIGIFFYGSYSGLGSSL</sequence>
<keyword id="KW-0150">Chloroplast</keyword>
<keyword id="KW-0472">Membrane</keyword>
<keyword id="KW-0602">Photosynthesis</keyword>
<keyword id="KW-0604">Photosystem II</keyword>
<keyword id="KW-0934">Plastid</keyword>
<keyword id="KW-0674">Reaction center</keyword>
<keyword id="KW-0793">Thylakoid</keyword>
<keyword id="KW-0812">Transmembrane</keyword>
<keyword id="KW-1133">Transmembrane helix</keyword>
<organism>
    <name type="scientific">Gnetum parvifolium</name>
    <name type="common">Small-leaved jointfir</name>
    <name type="synonym">Gnetum scandens var. parvifolium</name>
    <dbReference type="NCBI Taxonomy" id="33153"/>
    <lineage>
        <taxon>Eukaryota</taxon>
        <taxon>Viridiplantae</taxon>
        <taxon>Streptophyta</taxon>
        <taxon>Embryophyta</taxon>
        <taxon>Tracheophyta</taxon>
        <taxon>Spermatophyta</taxon>
        <taxon>Gnetopsida</taxon>
        <taxon>Gnetidae</taxon>
        <taxon>Gnetales</taxon>
        <taxon>Gnetaceae</taxon>
        <taxon>Gnetum</taxon>
    </lineage>
</organism>
<reference key="1">
    <citation type="journal article" date="2007" name="Mol. Biol. Evol.">
        <title>Chloroplast genome (cpDNA) of Cycas taitungensis and 56 cp protein-coding genes of Gnetum parvifolium: insights into cpDNA evolution and phylogeny of extant seed plants.</title>
        <authorList>
            <person name="Wu C.-S."/>
            <person name="Wang Y.-N."/>
            <person name="Liu S.-M."/>
            <person name="Chaw S.-M."/>
        </authorList>
    </citation>
    <scope>NUCLEOTIDE SEQUENCE [LARGE SCALE GENOMIC DNA]</scope>
</reference>
<reference key="2">
    <citation type="journal article" date="2009" name="Mol. Phylogenet. Evol.">
        <title>Evolution of reduced and compact chloroplast genomes (cpDNAs) in gnetophytes: Selection toward a lower-cost strategy.</title>
        <authorList>
            <person name="Wu C.-S."/>
            <person name="Lai Y.-T."/>
            <person name="Lin C.-P."/>
            <person name="Wang Y.-N."/>
            <person name="Chaw S.-M."/>
        </authorList>
    </citation>
    <scope>NUCLEOTIDE SEQUENCE [LARGE SCALE GENOMIC DNA]</scope>
</reference>
<gene>
    <name evidence="1" type="primary">psbJ</name>
</gene>
<feature type="chain" id="PRO_0000322059" description="Photosystem II reaction center protein J">
    <location>
        <begin position="1"/>
        <end position="40"/>
    </location>
</feature>
<feature type="transmembrane region" description="Helical" evidence="1">
    <location>
        <begin position="8"/>
        <end position="28"/>
    </location>
</feature>
<evidence type="ECO:0000255" key="1">
    <source>
        <dbReference type="HAMAP-Rule" id="MF_01305"/>
    </source>
</evidence>
<geneLocation type="chloroplast"/>
<comment type="function">
    <text evidence="1">One of the components of the core complex of photosystem II (PSII). PSII is a light-driven water:plastoquinone oxidoreductase that uses light energy to abstract electrons from H(2)O, generating O(2) and a proton gradient subsequently used for ATP formation. It consists of a core antenna complex that captures photons, and an electron transfer chain that converts photonic excitation into a charge separation.</text>
</comment>
<comment type="subunit">
    <text evidence="1">PSII is composed of 1 copy each of membrane proteins PsbA, PsbB, PsbC, PsbD, PsbE, PsbF, PsbH, PsbI, PsbJ, PsbK, PsbL, PsbM, PsbT, PsbX, PsbY, PsbZ, Psb30/Ycf12, at least 3 peripheral proteins of the oxygen-evolving complex and a large number of cofactors. It forms dimeric complexes.</text>
</comment>
<comment type="subcellular location">
    <subcellularLocation>
        <location evidence="1">Plastid</location>
        <location evidence="1">Chloroplast thylakoid membrane</location>
        <topology evidence="1">Single-pass membrane protein</topology>
    </subcellularLocation>
</comment>
<comment type="similarity">
    <text evidence="1">Belongs to the PsbJ family.</text>
</comment>
<protein>
    <recommendedName>
        <fullName evidence="1">Photosystem II reaction center protein J</fullName>
        <shortName evidence="1">PSII-J</shortName>
    </recommendedName>
</protein>
<proteinExistence type="inferred from homology"/>
<name>PSBJ_GNEPA</name>
<dbReference type="EMBL" id="AB295931">
    <property type="protein sequence ID" value="BAF64880.1"/>
    <property type="molecule type" value="Genomic_DNA"/>
</dbReference>
<dbReference type="EMBL" id="AP009569">
    <property type="protein sequence ID" value="BAH11280.1"/>
    <property type="molecule type" value="Genomic_DNA"/>
</dbReference>
<dbReference type="RefSeq" id="YP_002519769.1">
    <property type="nucleotide sequence ID" value="NC_011942.1"/>
</dbReference>
<dbReference type="SMR" id="A6BM35"/>
<dbReference type="GeneID" id="7368159"/>
<dbReference type="GO" id="GO:0009535">
    <property type="term" value="C:chloroplast thylakoid membrane"/>
    <property type="evidence" value="ECO:0007669"/>
    <property type="project" value="UniProtKB-SubCell"/>
</dbReference>
<dbReference type="GO" id="GO:0009539">
    <property type="term" value="C:photosystem II reaction center"/>
    <property type="evidence" value="ECO:0007669"/>
    <property type="project" value="InterPro"/>
</dbReference>
<dbReference type="GO" id="GO:0015979">
    <property type="term" value="P:photosynthesis"/>
    <property type="evidence" value="ECO:0007669"/>
    <property type="project" value="UniProtKB-UniRule"/>
</dbReference>
<dbReference type="Gene3D" id="6.10.250.2070">
    <property type="match status" value="1"/>
</dbReference>
<dbReference type="HAMAP" id="MF_01305">
    <property type="entry name" value="PSII_PsbJ"/>
    <property type="match status" value="1"/>
</dbReference>
<dbReference type="InterPro" id="IPR002682">
    <property type="entry name" value="PSII_PsbJ"/>
</dbReference>
<dbReference type="InterPro" id="IPR037267">
    <property type="entry name" value="PSII_PsbJ_sf"/>
</dbReference>
<dbReference type="NCBIfam" id="NF002722">
    <property type="entry name" value="PRK02565.1"/>
    <property type="match status" value="1"/>
</dbReference>
<dbReference type="PANTHER" id="PTHR34812">
    <property type="entry name" value="PHOTOSYSTEM II REACTION CENTER PROTEIN J"/>
    <property type="match status" value="1"/>
</dbReference>
<dbReference type="PANTHER" id="PTHR34812:SF3">
    <property type="entry name" value="PHOTOSYSTEM II REACTION CENTER PROTEIN J"/>
    <property type="match status" value="1"/>
</dbReference>
<dbReference type="Pfam" id="PF01788">
    <property type="entry name" value="PsbJ"/>
    <property type="match status" value="1"/>
</dbReference>
<dbReference type="SUPFAM" id="SSF161021">
    <property type="entry name" value="Photosystem II reaction center protein J, PsbJ"/>
    <property type="match status" value="1"/>
</dbReference>